<sequence>MAKWTELQDKSFLEATARERAVGIVDEGTFTEFCGPFDKIYSPHLPLMGEAIEYDDGLVAGVGKIGKKPIFVISQEGRFIGGSIGEVSGAKMVKTIQLASDLYEEMVSEKPDLPEEMRPAVVISFETGGVRLHEANAGLLAHAEVMDQIQNCRGRVPIISLIGSRVGCFGGMGFVAAATDVIIMSQFGRLGLTGPEVIEQEMGKDEFDASDRALVYRTTGGKHKYIIGDCNYLAADSIRSFRETTTAVLQKPMEEIETFRRIGSMEKIKEQIELVKLSVSLKPKDSMDVWAHAGNENPESLINMTLDEFLAQAKRLKA</sequence>
<keyword id="KW-0963">Cytoplasm</keyword>
<keyword id="KW-0808">Transferase</keyword>
<reference key="1">
    <citation type="journal article" date="1997" name="Eur. J. Biochem.">
        <title>Sequence of a gene cluster from Malonomonas rubra encoding components of the malonate decarboxylase Na+ pump and evidence for their function.</title>
        <authorList>
            <person name="Berg M."/>
            <person name="Hilbi H."/>
            <person name="Dimroth P."/>
        </authorList>
    </citation>
    <scope>NUCLEOTIDE SEQUENCE [GENOMIC DNA]</scope>
    <scope>CHARACTERIZATION</scope>
</reference>
<comment type="function">
    <text>Gamma subunit of the biotin-dependent malonate decarboxylase multienzyme complex (EC 7.2.4.4). The two subunits MADC and MADD are required for the transfer of the malonate carboxy group from the acyl-carrier protein (ACP) to the prosthetic group of the biotin carrier MADF. Required for the regeneration of ACP.</text>
</comment>
<comment type="catalytic activity">
    <reaction>
        <text>N(6)-biotinyl-L-lysyl-[protein] + malonyl-[ACP] = N(6)-carboxybiotinyl-L-lysyl-[protein] + acetyl-[ACP]</text>
        <dbReference type="Rhea" id="RHEA:23028"/>
        <dbReference type="Rhea" id="RHEA-COMP:9621"/>
        <dbReference type="Rhea" id="RHEA-COMP:9623"/>
        <dbReference type="Rhea" id="RHEA-COMP:10505"/>
        <dbReference type="Rhea" id="RHEA-COMP:10506"/>
        <dbReference type="ChEBI" id="CHEBI:78446"/>
        <dbReference type="ChEBI" id="CHEBI:78449"/>
        <dbReference type="ChEBI" id="CHEBI:83144"/>
        <dbReference type="ChEBI" id="CHEBI:83145"/>
        <dbReference type="EC" id="2.1.3.10"/>
    </reaction>
</comment>
<comment type="subcellular location">
    <subcellularLocation>
        <location evidence="2">Cytoplasm</location>
    </subcellularLocation>
</comment>
<proteinExistence type="evidence at protein level"/>
<feature type="initiator methionine" description="Removed" evidence="2">
    <location>
        <position position="1"/>
    </location>
</feature>
<feature type="chain" id="PRO_5000145253" description="Malonyl-S-ACP:biotin-protein carboxyltransferase MADC">
    <location>
        <begin position="2"/>
        <end position="318"/>
    </location>
</feature>
<feature type="domain" description="CoA carboxyltransferase N-terminal" evidence="1">
    <location>
        <begin position="2"/>
        <end position="257"/>
    </location>
</feature>
<protein>
    <recommendedName>
        <fullName>Malonyl-S-ACP:biotin-protein carboxyltransferase MADC</fullName>
        <ecNumber>2.1.3.10</ecNumber>
    </recommendedName>
</protein>
<accession>O06926</accession>
<organism>
    <name type="scientific">Malonomonas rubra</name>
    <dbReference type="NCBI Taxonomy" id="57040"/>
    <lineage>
        <taxon>Bacteria</taxon>
        <taxon>Pseudomonadati</taxon>
        <taxon>Thermodesulfobacteriota</taxon>
        <taxon>Desulfuromonadia</taxon>
        <taxon>Desulfuromonadales</taxon>
        <taxon>Geopsychrobacteraceae</taxon>
        <taxon>Malonomonas</taxon>
    </lineage>
</organism>
<evidence type="ECO:0000255" key="1">
    <source>
        <dbReference type="PROSITE-ProRule" id="PRU01136"/>
    </source>
</evidence>
<evidence type="ECO:0000305" key="2"/>
<gene>
    <name type="primary">madC</name>
</gene>
<name>MADC_MALRU</name>
<dbReference type="EC" id="2.1.3.10"/>
<dbReference type="EMBL" id="U87980">
    <property type="protein sequence ID" value="AAC45402.1"/>
    <property type="molecule type" value="Genomic_DNA"/>
</dbReference>
<dbReference type="SMR" id="O06926"/>
<dbReference type="TCDB" id="3.B.1.1.4">
    <property type="family name" value="the na(+)-transporting carboxylic acid decarboxylase (nat-dc) family"/>
</dbReference>
<dbReference type="KEGG" id="ag:AAC45402"/>
<dbReference type="BioCyc" id="MetaCyc:MONOMER-14255"/>
<dbReference type="GO" id="GO:0005737">
    <property type="term" value="C:cytoplasm"/>
    <property type="evidence" value="ECO:0007669"/>
    <property type="project" value="UniProtKB-SubCell"/>
</dbReference>
<dbReference type="GO" id="GO:0003989">
    <property type="term" value="F:acetyl-CoA carboxylase activity"/>
    <property type="evidence" value="ECO:0007669"/>
    <property type="project" value="TreeGrafter"/>
</dbReference>
<dbReference type="GO" id="GO:0016831">
    <property type="term" value="F:carboxy-lyase activity"/>
    <property type="evidence" value="ECO:0007669"/>
    <property type="project" value="InterPro"/>
</dbReference>
<dbReference type="GO" id="GO:0016740">
    <property type="term" value="F:transferase activity"/>
    <property type="evidence" value="ECO:0007669"/>
    <property type="project" value="UniProtKB-KW"/>
</dbReference>
<dbReference type="GO" id="GO:0005975">
    <property type="term" value="P:carbohydrate metabolic process"/>
    <property type="evidence" value="ECO:0007669"/>
    <property type="project" value="InterPro"/>
</dbReference>
<dbReference type="GO" id="GO:0006633">
    <property type="term" value="P:fatty acid biosynthetic process"/>
    <property type="evidence" value="ECO:0007669"/>
    <property type="project" value="TreeGrafter"/>
</dbReference>
<dbReference type="GO" id="GO:2001295">
    <property type="term" value="P:malonyl-CoA biosynthetic process"/>
    <property type="evidence" value="ECO:0007669"/>
    <property type="project" value="TreeGrafter"/>
</dbReference>
<dbReference type="Gene3D" id="3.90.226.10">
    <property type="entry name" value="2-enoyl-CoA Hydratase, Chain A, domain 1"/>
    <property type="match status" value="1"/>
</dbReference>
<dbReference type="InterPro" id="IPR034733">
    <property type="entry name" value="AcCoA_carboxyl_beta"/>
</dbReference>
<dbReference type="InterPro" id="IPR029045">
    <property type="entry name" value="ClpP/crotonase-like_dom_sf"/>
</dbReference>
<dbReference type="InterPro" id="IPR011762">
    <property type="entry name" value="COA_CT_N"/>
</dbReference>
<dbReference type="InterPro" id="IPR017556">
    <property type="entry name" value="Malonate_beta"/>
</dbReference>
<dbReference type="NCBIfam" id="TIGR03133">
    <property type="entry name" value="malonate_beta"/>
    <property type="match status" value="1"/>
</dbReference>
<dbReference type="NCBIfam" id="NF005530">
    <property type="entry name" value="PRK07189.1"/>
    <property type="match status" value="1"/>
</dbReference>
<dbReference type="PANTHER" id="PTHR42995">
    <property type="entry name" value="ACETYL-COENZYME A CARBOXYLASE CARBOXYL TRANSFERASE SUBUNIT BETA, CHLOROPLASTIC"/>
    <property type="match status" value="1"/>
</dbReference>
<dbReference type="PANTHER" id="PTHR42995:SF1">
    <property type="entry name" value="MALONATE DECARBOXYLASE BETA SUBUNIT"/>
    <property type="match status" value="1"/>
</dbReference>
<dbReference type="Pfam" id="PF01039">
    <property type="entry name" value="Carboxyl_trans"/>
    <property type="match status" value="1"/>
</dbReference>
<dbReference type="SUPFAM" id="SSF52096">
    <property type="entry name" value="ClpP/crotonase"/>
    <property type="match status" value="1"/>
</dbReference>
<dbReference type="PROSITE" id="PS50980">
    <property type="entry name" value="COA_CT_NTER"/>
    <property type="match status" value="1"/>
</dbReference>